<reference key="1">
    <citation type="journal article" date="2005" name="Nucleic Acids Res.">
        <title>Genome dynamics and diversity of Shigella species, the etiologic agents of bacillary dysentery.</title>
        <authorList>
            <person name="Yang F."/>
            <person name="Yang J."/>
            <person name="Zhang X."/>
            <person name="Chen L."/>
            <person name="Jiang Y."/>
            <person name="Yan Y."/>
            <person name="Tang X."/>
            <person name="Wang J."/>
            <person name="Xiong Z."/>
            <person name="Dong J."/>
            <person name="Xue Y."/>
            <person name="Zhu Y."/>
            <person name="Xu X."/>
            <person name="Sun L."/>
            <person name="Chen S."/>
            <person name="Nie H."/>
            <person name="Peng J."/>
            <person name="Xu J."/>
            <person name="Wang Y."/>
            <person name="Yuan Z."/>
            <person name="Wen Y."/>
            <person name="Yao Z."/>
            <person name="Shen Y."/>
            <person name="Qiang B."/>
            <person name="Hou Y."/>
            <person name="Yu J."/>
            <person name="Jin Q."/>
        </authorList>
    </citation>
    <scope>NUCLEOTIDE SEQUENCE [LARGE SCALE GENOMIC DNA]</scope>
    <source>
        <strain>Sd197</strain>
    </source>
</reference>
<sequence length="197" mass="21376">MTSLYLASGSPRRQELLAQLGVTFERIVTGIEEQRQPQESAQQYVVRLACEKAQAGVAQTAQDLPVLGADTIVILNGEVLEKPRDAEHAAQMLRKLSGQTHQVMTAVALADSQHILDCLVVTDVTFRTLTDEDIAGYVASGEPLDKAGAYGIQGLGGCFVRKINGSYHAVVGLPLVETYELLSNFNALREKRDKHDG</sequence>
<organism>
    <name type="scientific">Shigella dysenteriae serotype 1 (strain Sd197)</name>
    <dbReference type="NCBI Taxonomy" id="300267"/>
    <lineage>
        <taxon>Bacteria</taxon>
        <taxon>Pseudomonadati</taxon>
        <taxon>Pseudomonadota</taxon>
        <taxon>Gammaproteobacteria</taxon>
        <taxon>Enterobacterales</taxon>
        <taxon>Enterobacteriaceae</taxon>
        <taxon>Shigella</taxon>
    </lineage>
</organism>
<protein>
    <recommendedName>
        <fullName evidence="1">dTTP/UTP pyrophosphatase</fullName>
        <shortName evidence="1">dTTPase/UTPase</shortName>
        <ecNumber evidence="1">3.6.1.9</ecNumber>
    </recommendedName>
    <alternativeName>
        <fullName evidence="1">Nucleoside triphosphate pyrophosphatase</fullName>
    </alternativeName>
    <alternativeName>
        <fullName evidence="1">Nucleotide pyrophosphatase</fullName>
        <shortName evidence="1">Nucleotide PPase</shortName>
    </alternativeName>
</protein>
<gene>
    <name type="primary">yceF</name>
    <name type="ordered locus">SDY_3423</name>
</gene>
<evidence type="ECO:0000255" key="1">
    <source>
        <dbReference type="HAMAP-Rule" id="MF_00528"/>
    </source>
</evidence>
<feature type="chain" id="PRO_0000267433" description="dTTP/UTP pyrophosphatase">
    <location>
        <begin position="1"/>
        <end position="197"/>
    </location>
</feature>
<feature type="active site" description="Proton acceptor" evidence="1">
    <location>
        <position position="70"/>
    </location>
</feature>
<feature type="site" description="Important for substrate specificity" evidence="1">
    <location>
        <position position="12"/>
    </location>
</feature>
<feature type="site" description="Important for substrate specificity" evidence="1">
    <location>
        <position position="71"/>
    </location>
</feature>
<feature type="site" description="Important for substrate specificity" evidence="1">
    <location>
        <position position="153"/>
    </location>
</feature>
<dbReference type="EC" id="3.6.1.9" evidence="1"/>
<dbReference type="EMBL" id="CP000034">
    <property type="protein sequence ID" value="ABB63413.1"/>
    <property type="molecule type" value="Genomic_DNA"/>
</dbReference>
<dbReference type="RefSeq" id="WP_000203088.1">
    <property type="nucleotide sequence ID" value="NC_007606.1"/>
</dbReference>
<dbReference type="RefSeq" id="YP_404904.1">
    <property type="nucleotide sequence ID" value="NC_007606.1"/>
</dbReference>
<dbReference type="SMR" id="Q32B92"/>
<dbReference type="STRING" id="300267.SDY_3423"/>
<dbReference type="EnsemblBacteria" id="ABB63413">
    <property type="protein sequence ID" value="ABB63413"/>
    <property type="gene ID" value="SDY_3423"/>
</dbReference>
<dbReference type="KEGG" id="sdy:SDY_3423"/>
<dbReference type="PATRIC" id="fig|300267.13.peg.4081"/>
<dbReference type="HOGENOM" id="CLU_040416_2_1_6"/>
<dbReference type="Proteomes" id="UP000002716">
    <property type="component" value="Chromosome"/>
</dbReference>
<dbReference type="GO" id="GO:0005737">
    <property type="term" value="C:cytoplasm"/>
    <property type="evidence" value="ECO:0007669"/>
    <property type="project" value="UniProtKB-SubCell"/>
</dbReference>
<dbReference type="GO" id="GO:0036218">
    <property type="term" value="F:dTTP diphosphatase activity"/>
    <property type="evidence" value="ECO:0007669"/>
    <property type="project" value="RHEA"/>
</dbReference>
<dbReference type="GO" id="GO:0036221">
    <property type="term" value="F:UTP diphosphatase activity"/>
    <property type="evidence" value="ECO:0007669"/>
    <property type="project" value="RHEA"/>
</dbReference>
<dbReference type="GO" id="GO:0009117">
    <property type="term" value="P:nucleotide metabolic process"/>
    <property type="evidence" value="ECO:0007669"/>
    <property type="project" value="UniProtKB-KW"/>
</dbReference>
<dbReference type="CDD" id="cd00555">
    <property type="entry name" value="Maf"/>
    <property type="match status" value="1"/>
</dbReference>
<dbReference type="FunFam" id="3.90.950.10:FF:000004">
    <property type="entry name" value="dTTP/UTP pyrophosphatase"/>
    <property type="match status" value="1"/>
</dbReference>
<dbReference type="Gene3D" id="3.90.950.10">
    <property type="match status" value="1"/>
</dbReference>
<dbReference type="HAMAP" id="MF_00528">
    <property type="entry name" value="Maf"/>
    <property type="match status" value="1"/>
</dbReference>
<dbReference type="InterPro" id="IPR029001">
    <property type="entry name" value="ITPase-like_fam"/>
</dbReference>
<dbReference type="InterPro" id="IPR003697">
    <property type="entry name" value="Maf-like"/>
</dbReference>
<dbReference type="NCBIfam" id="TIGR00172">
    <property type="entry name" value="maf"/>
    <property type="match status" value="1"/>
</dbReference>
<dbReference type="PANTHER" id="PTHR43213">
    <property type="entry name" value="BIFUNCTIONAL DTTP/UTP PYROPHOSPHATASE/METHYLTRANSFERASE PROTEIN-RELATED"/>
    <property type="match status" value="1"/>
</dbReference>
<dbReference type="PANTHER" id="PTHR43213:SF5">
    <property type="entry name" value="BIFUNCTIONAL DTTP_UTP PYROPHOSPHATASE_METHYLTRANSFERASE PROTEIN-RELATED"/>
    <property type="match status" value="1"/>
</dbReference>
<dbReference type="Pfam" id="PF02545">
    <property type="entry name" value="Maf"/>
    <property type="match status" value="1"/>
</dbReference>
<dbReference type="PIRSF" id="PIRSF006305">
    <property type="entry name" value="Maf"/>
    <property type="match status" value="1"/>
</dbReference>
<dbReference type="SUPFAM" id="SSF52972">
    <property type="entry name" value="ITPase-like"/>
    <property type="match status" value="1"/>
</dbReference>
<keyword id="KW-0963">Cytoplasm</keyword>
<keyword id="KW-0378">Hydrolase</keyword>
<keyword id="KW-0546">Nucleotide metabolism</keyword>
<keyword id="KW-1185">Reference proteome</keyword>
<accession>Q32B92</accession>
<comment type="function">
    <text evidence="1">Nucleoside triphosphate pyrophosphatase that hydrolyzes dTTP and UTP. May have a dual role in cell division arrest and in preventing the incorporation of modified nucleotides into cellular nucleic acids.</text>
</comment>
<comment type="catalytic activity">
    <reaction evidence="1">
        <text>dTTP + H2O = dTMP + diphosphate + H(+)</text>
        <dbReference type="Rhea" id="RHEA:28534"/>
        <dbReference type="ChEBI" id="CHEBI:15377"/>
        <dbReference type="ChEBI" id="CHEBI:15378"/>
        <dbReference type="ChEBI" id="CHEBI:33019"/>
        <dbReference type="ChEBI" id="CHEBI:37568"/>
        <dbReference type="ChEBI" id="CHEBI:63528"/>
        <dbReference type="EC" id="3.6.1.9"/>
    </reaction>
</comment>
<comment type="catalytic activity">
    <reaction evidence="1">
        <text>UTP + H2O = UMP + diphosphate + H(+)</text>
        <dbReference type="Rhea" id="RHEA:29395"/>
        <dbReference type="ChEBI" id="CHEBI:15377"/>
        <dbReference type="ChEBI" id="CHEBI:15378"/>
        <dbReference type="ChEBI" id="CHEBI:33019"/>
        <dbReference type="ChEBI" id="CHEBI:46398"/>
        <dbReference type="ChEBI" id="CHEBI:57865"/>
        <dbReference type="EC" id="3.6.1.9"/>
    </reaction>
</comment>
<comment type="cofactor">
    <cofactor evidence="1">
        <name>a divalent metal cation</name>
        <dbReference type="ChEBI" id="CHEBI:60240"/>
    </cofactor>
</comment>
<comment type="subcellular location">
    <subcellularLocation>
        <location evidence="1">Cytoplasm</location>
    </subcellularLocation>
</comment>
<comment type="similarity">
    <text evidence="1">Belongs to the Maf family. YhdE subfamily.</text>
</comment>
<proteinExistence type="inferred from homology"/>
<name>NTPPA_SHIDS</name>